<keyword id="KW-0963">Cytoplasm</keyword>
<keyword id="KW-0269">Exonuclease</keyword>
<keyword id="KW-0378">Hydrolase</keyword>
<keyword id="KW-0540">Nuclease</keyword>
<accession>A1URW5</accession>
<organism>
    <name type="scientific">Bartonella bacilliformis (strain ATCC 35685 / KC583 / Herrer 020/F12,63)</name>
    <dbReference type="NCBI Taxonomy" id="360095"/>
    <lineage>
        <taxon>Bacteria</taxon>
        <taxon>Pseudomonadati</taxon>
        <taxon>Pseudomonadota</taxon>
        <taxon>Alphaproteobacteria</taxon>
        <taxon>Hyphomicrobiales</taxon>
        <taxon>Bartonellaceae</taxon>
        <taxon>Bartonella</taxon>
    </lineage>
</organism>
<gene>
    <name evidence="1" type="primary">xseB</name>
    <name type="ordered locus">BARBAKC583_0399</name>
</gene>
<sequence>MKQEIKKDDISGLSFEEALKQLEVIVENLERGDVPLEQSIDIYERGEALKNHCDKLLKVAEAKIEKIQLSNNGTPEGVKPLDPE</sequence>
<proteinExistence type="inferred from homology"/>
<name>EX7S_BARBK</name>
<feature type="chain" id="PRO_0000303690" description="Exodeoxyribonuclease 7 small subunit">
    <location>
        <begin position="1"/>
        <end position="84"/>
    </location>
</feature>
<protein>
    <recommendedName>
        <fullName evidence="1">Exodeoxyribonuclease 7 small subunit</fullName>
        <ecNumber evidence="1">3.1.11.6</ecNumber>
    </recommendedName>
    <alternativeName>
        <fullName evidence="1">Exodeoxyribonuclease VII small subunit</fullName>
        <shortName evidence="1">Exonuclease VII small subunit</shortName>
    </alternativeName>
</protein>
<reference key="1">
    <citation type="submission" date="2006-12" db="EMBL/GenBank/DDBJ databases">
        <authorList>
            <person name="Hendrix L."/>
            <person name="Mohamoud Y."/>
            <person name="Radune D."/>
            <person name="Shvartsbeyn A."/>
            <person name="Daugherty S."/>
            <person name="Dodson R."/>
            <person name="Durkin A.S."/>
            <person name="Harkins D."/>
            <person name="Huot H."/>
            <person name="Kothari S.P."/>
            <person name="Madupu R."/>
            <person name="Li J."/>
            <person name="Nelson W.C."/>
            <person name="Shrivastava S."/>
            <person name="Giglio M.G."/>
            <person name="Haft D."/>
            <person name="Selengut J."/>
            <person name="Fraser-Ligget C."/>
            <person name="Seshadri R."/>
        </authorList>
    </citation>
    <scope>NUCLEOTIDE SEQUENCE [LARGE SCALE GENOMIC DNA]</scope>
    <source>
        <strain>ATCC 35685 / KC583 / Herrer 020/F12,63</strain>
    </source>
</reference>
<comment type="function">
    <text evidence="1">Bidirectionally degrades single-stranded DNA into large acid-insoluble oligonucleotides, which are then degraded further into small acid-soluble oligonucleotides.</text>
</comment>
<comment type="catalytic activity">
    <reaction evidence="1">
        <text>Exonucleolytic cleavage in either 5'- to 3'- or 3'- to 5'-direction to yield nucleoside 5'-phosphates.</text>
        <dbReference type="EC" id="3.1.11.6"/>
    </reaction>
</comment>
<comment type="subunit">
    <text evidence="1">Heterooligomer composed of large and small subunits.</text>
</comment>
<comment type="subcellular location">
    <subcellularLocation>
        <location evidence="1">Cytoplasm</location>
    </subcellularLocation>
</comment>
<comment type="similarity">
    <text evidence="1">Belongs to the XseB family.</text>
</comment>
<evidence type="ECO:0000255" key="1">
    <source>
        <dbReference type="HAMAP-Rule" id="MF_00337"/>
    </source>
</evidence>
<dbReference type="EC" id="3.1.11.6" evidence="1"/>
<dbReference type="EMBL" id="CP000524">
    <property type="protein sequence ID" value="ABM44609.1"/>
    <property type="molecule type" value="Genomic_DNA"/>
</dbReference>
<dbReference type="RefSeq" id="WP_005766408.1">
    <property type="nucleotide sequence ID" value="NC_008783.1"/>
</dbReference>
<dbReference type="SMR" id="A1URW5"/>
<dbReference type="STRING" id="360095.BARBAKC583_0399"/>
<dbReference type="GeneID" id="4683889"/>
<dbReference type="KEGG" id="bbk:BARBAKC583_0399"/>
<dbReference type="PATRIC" id="fig|360095.6.peg.382"/>
<dbReference type="eggNOG" id="COG1722">
    <property type="taxonomic scope" value="Bacteria"/>
</dbReference>
<dbReference type="HOGENOM" id="CLU_145918_0_3_5"/>
<dbReference type="OrthoDB" id="9808145at2"/>
<dbReference type="Proteomes" id="UP000000643">
    <property type="component" value="Chromosome"/>
</dbReference>
<dbReference type="GO" id="GO:0005829">
    <property type="term" value="C:cytosol"/>
    <property type="evidence" value="ECO:0007669"/>
    <property type="project" value="TreeGrafter"/>
</dbReference>
<dbReference type="GO" id="GO:0009318">
    <property type="term" value="C:exodeoxyribonuclease VII complex"/>
    <property type="evidence" value="ECO:0007669"/>
    <property type="project" value="InterPro"/>
</dbReference>
<dbReference type="GO" id="GO:0008855">
    <property type="term" value="F:exodeoxyribonuclease VII activity"/>
    <property type="evidence" value="ECO:0007669"/>
    <property type="project" value="UniProtKB-UniRule"/>
</dbReference>
<dbReference type="GO" id="GO:0006308">
    <property type="term" value="P:DNA catabolic process"/>
    <property type="evidence" value="ECO:0007669"/>
    <property type="project" value="UniProtKB-UniRule"/>
</dbReference>
<dbReference type="Gene3D" id="1.10.287.1040">
    <property type="entry name" value="Exonuclease VII, small subunit"/>
    <property type="match status" value="1"/>
</dbReference>
<dbReference type="HAMAP" id="MF_00337">
    <property type="entry name" value="Exonuc_7_S"/>
    <property type="match status" value="1"/>
</dbReference>
<dbReference type="InterPro" id="IPR003761">
    <property type="entry name" value="Exonuc_VII_S"/>
</dbReference>
<dbReference type="InterPro" id="IPR037004">
    <property type="entry name" value="Exonuc_VII_ssu_sf"/>
</dbReference>
<dbReference type="NCBIfam" id="NF002139">
    <property type="entry name" value="PRK00977.1-3"/>
    <property type="match status" value="1"/>
</dbReference>
<dbReference type="NCBIfam" id="TIGR01280">
    <property type="entry name" value="xseB"/>
    <property type="match status" value="1"/>
</dbReference>
<dbReference type="PANTHER" id="PTHR34137">
    <property type="entry name" value="EXODEOXYRIBONUCLEASE 7 SMALL SUBUNIT"/>
    <property type="match status" value="1"/>
</dbReference>
<dbReference type="PANTHER" id="PTHR34137:SF1">
    <property type="entry name" value="EXODEOXYRIBONUCLEASE 7 SMALL SUBUNIT"/>
    <property type="match status" value="1"/>
</dbReference>
<dbReference type="Pfam" id="PF02609">
    <property type="entry name" value="Exonuc_VII_S"/>
    <property type="match status" value="1"/>
</dbReference>
<dbReference type="SUPFAM" id="SSF116842">
    <property type="entry name" value="XseB-like"/>
    <property type="match status" value="1"/>
</dbReference>